<protein>
    <recommendedName>
        <fullName evidence="1">Histidine--tRNA ligase</fullName>
        <ecNumber evidence="1">6.1.1.21</ecNumber>
    </recommendedName>
    <alternativeName>
        <fullName evidence="1">Histidyl-tRNA synthetase</fullName>
        <shortName evidence="1">HisRS</shortName>
    </alternativeName>
</protein>
<organism>
    <name type="scientific">Vibrio cholerae serotype O1 (strain ATCC 39315 / El Tor Inaba N16961)</name>
    <dbReference type="NCBI Taxonomy" id="243277"/>
    <lineage>
        <taxon>Bacteria</taxon>
        <taxon>Pseudomonadati</taxon>
        <taxon>Pseudomonadota</taxon>
        <taxon>Gammaproteobacteria</taxon>
        <taxon>Vibrionales</taxon>
        <taxon>Vibrionaceae</taxon>
        <taxon>Vibrio</taxon>
    </lineage>
</organism>
<evidence type="ECO:0000255" key="1">
    <source>
        <dbReference type="HAMAP-Rule" id="MF_00127"/>
    </source>
</evidence>
<accession>Q9KTX0</accession>
<dbReference type="EC" id="6.1.1.21" evidence="1"/>
<dbReference type="EMBL" id="AE003852">
    <property type="protein sequence ID" value="AAF93925.1"/>
    <property type="molecule type" value="Genomic_DNA"/>
</dbReference>
<dbReference type="PIR" id="G82283">
    <property type="entry name" value="G82283"/>
</dbReference>
<dbReference type="RefSeq" id="NP_230409.1">
    <property type="nucleotide sequence ID" value="NC_002505.1"/>
</dbReference>
<dbReference type="RefSeq" id="WP_001140461.1">
    <property type="nucleotide sequence ID" value="NZ_LT906614.1"/>
</dbReference>
<dbReference type="SMR" id="Q9KTX0"/>
<dbReference type="STRING" id="243277.VC_0760"/>
<dbReference type="DNASU" id="2615303"/>
<dbReference type="EnsemblBacteria" id="AAF93925">
    <property type="protein sequence ID" value="AAF93925"/>
    <property type="gene ID" value="VC_0760"/>
</dbReference>
<dbReference type="GeneID" id="89515095"/>
<dbReference type="KEGG" id="vch:VC_0760"/>
<dbReference type="PATRIC" id="fig|243277.26.peg.724"/>
<dbReference type="eggNOG" id="COG0124">
    <property type="taxonomic scope" value="Bacteria"/>
</dbReference>
<dbReference type="HOGENOM" id="CLU_025113_1_1_6"/>
<dbReference type="Proteomes" id="UP000000584">
    <property type="component" value="Chromosome 1"/>
</dbReference>
<dbReference type="GO" id="GO:0005737">
    <property type="term" value="C:cytoplasm"/>
    <property type="evidence" value="ECO:0007669"/>
    <property type="project" value="UniProtKB-SubCell"/>
</dbReference>
<dbReference type="GO" id="GO:0005524">
    <property type="term" value="F:ATP binding"/>
    <property type="evidence" value="ECO:0007669"/>
    <property type="project" value="UniProtKB-UniRule"/>
</dbReference>
<dbReference type="GO" id="GO:0004821">
    <property type="term" value="F:histidine-tRNA ligase activity"/>
    <property type="evidence" value="ECO:0000318"/>
    <property type="project" value="GO_Central"/>
</dbReference>
<dbReference type="GO" id="GO:0006427">
    <property type="term" value="P:histidyl-tRNA aminoacylation"/>
    <property type="evidence" value="ECO:0000318"/>
    <property type="project" value="GO_Central"/>
</dbReference>
<dbReference type="CDD" id="cd00773">
    <property type="entry name" value="HisRS-like_core"/>
    <property type="match status" value="1"/>
</dbReference>
<dbReference type="CDD" id="cd00859">
    <property type="entry name" value="HisRS_anticodon"/>
    <property type="match status" value="1"/>
</dbReference>
<dbReference type="FunFam" id="3.30.930.10:FF:000005">
    <property type="entry name" value="Histidine--tRNA ligase"/>
    <property type="match status" value="1"/>
</dbReference>
<dbReference type="FunFam" id="3.40.50.800:FF:000007">
    <property type="entry name" value="Histidine--tRNA ligase"/>
    <property type="match status" value="1"/>
</dbReference>
<dbReference type="Gene3D" id="3.40.50.800">
    <property type="entry name" value="Anticodon-binding domain"/>
    <property type="match status" value="1"/>
</dbReference>
<dbReference type="Gene3D" id="3.30.930.10">
    <property type="entry name" value="Bira Bifunctional Protein, Domain 2"/>
    <property type="match status" value="1"/>
</dbReference>
<dbReference type="HAMAP" id="MF_00127">
    <property type="entry name" value="His_tRNA_synth"/>
    <property type="match status" value="1"/>
</dbReference>
<dbReference type="InterPro" id="IPR006195">
    <property type="entry name" value="aa-tRNA-synth_II"/>
</dbReference>
<dbReference type="InterPro" id="IPR045864">
    <property type="entry name" value="aa-tRNA-synth_II/BPL/LPL"/>
</dbReference>
<dbReference type="InterPro" id="IPR004154">
    <property type="entry name" value="Anticodon-bd"/>
</dbReference>
<dbReference type="InterPro" id="IPR036621">
    <property type="entry name" value="Anticodon-bd_dom_sf"/>
</dbReference>
<dbReference type="InterPro" id="IPR015807">
    <property type="entry name" value="His-tRNA-ligase"/>
</dbReference>
<dbReference type="InterPro" id="IPR041715">
    <property type="entry name" value="HisRS-like_core"/>
</dbReference>
<dbReference type="InterPro" id="IPR004516">
    <property type="entry name" value="HisRS/HisZ"/>
</dbReference>
<dbReference type="InterPro" id="IPR033656">
    <property type="entry name" value="HisRS_anticodon"/>
</dbReference>
<dbReference type="NCBIfam" id="TIGR00442">
    <property type="entry name" value="hisS"/>
    <property type="match status" value="1"/>
</dbReference>
<dbReference type="PANTHER" id="PTHR43707:SF1">
    <property type="entry name" value="HISTIDINE--TRNA LIGASE, MITOCHONDRIAL-RELATED"/>
    <property type="match status" value="1"/>
</dbReference>
<dbReference type="PANTHER" id="PTHR43707">
    <property type="entry name" value="HISTIDYL-TRNA SYNTHETASE"/>
    <property type="match status" value="1"/>
</dbReference>
<dbReference type="Pfam" id="PF03129">
    <property type="entry name" value="HGTP_anticodon"/>
    <property type="match status" value="1"/>
</dbReference>
<dbReference type="Pfam" id="PF13393">
    <property type="entry name" value="tRNA-synt_His"/>
    <property type="match status" value="1"/>
</dbReference>
<dbReference type="PIRSF" id="PIRSF001549">
    <property type="entry name" value="His-tRNA_synth"/>
    <property type="match status" value="1"/>
</dbReference>
<dbReference type="SUPFAM" id="SSF52954">
    <property type="entry name" value="Class II aaRS ABD-related"/>
    <property type="match status" value="1"/>
</dbReference>
<dbReference type="SUPFAM" id="SSF55681">
    <property type="entry name" value="Class II aaRS and biotin synthetases"/>
    <property type="match status" value="1"/>
</dbReference>
<dbReference type="PROSITE" id="PS50862">
    <property type="entry name" value="AA_TRNA_LIGASE_II"/>
    <property type="match status" value="1"/>
</dbReference>
<proteinExistence type="inferred from homology"/>
<keyword id="KW-0030">Aminoacyl-tRNA synthetase</keyword>
<keyword id="KW-0067">ATP-binding</keyword>
<keyword id="KW-0963">Cytoplasm</keyword>
<keyword id="KW-0436">Ligase</keyword>
<keyword id="KW-0547">Nucleotide-binding</keyword>
<keyword id="KW-0648">Protein biosynthesis</keyword>
<keyword id="KW-1185">Reference proteome</keyword>
<reference key="1">
    <citation type="journal article" date="2000" name="Nature">
        <title>DNA sequence of both chromosomes of the cholera pathogen Vibrio cholerae.</title>
        <authorList>
            <person name="Heidelberg J.F."/>
            <person name="Eisen J.A."/>
            <person name="Nelson W.C."/>
            <person name="Clayton R.A."/>
            <person name="Gwinn M.L."/>
            <person name="Dodson R.J."/>
            <person name="Haft D.H."/>
            <person name="Hickey E.K."/>
            <person name="Peterson J.D."/>
            <person name="Umayam L.A."/>
            <person name="Gill S.R."/>
            <person name="Nelson K.E."/>
            <person name="Read T.D."/>
            <person name="Tettelin H."/>
            <person name="Richardson D.L."/>
            <person name="Ermolaeva M.D."/>
            <person name="Vamathevan J.J."/>
            <person name="Bass S."/>
            <person name="Qin H."/>
            <person name="Dragoi I."/>
            <person name="Sellers P."/>
            <person name="McDonald L.A."/>
            <person name="Utterback T.R."/>
            <person name="Fleischmann R.D."/>
            <person name="Nierman W.C."/>
            <person name="White O."/>
            <person name="Salzberg S.L."/>
            <person name="Smith H.O."/>
            <person name="Colwell R.R."/>
            <person name="Mekalanos J.J."/>
            <person name="Venter J.C."/>
            <person name="Fraser C.M."/>
        </authorList>
    </citation>
    <scope>NUCLEOTIDE SEQUENCE [LARGE SCALE GENOMIC DNA]</scope>
    <source>
        <strain>ATCC 39315 / El Tor Inaba N16961</strain>
    </source>
</reference>
<sequence length="422" mass="46929">MAKTIQAIRGMNDCLPTQSPLWQKVEGVVKNVISAYGYSEVRMPIVEMTHLFSRAIGEVTDVVEKEMYTFEDRNGDSLTLRPEGTAGCVRSGIENGLLYNQEQRLWYMGPMFRHERPQKGRYRQFHQCGVEVFGLDGPDVDAELIMMTARLWRELGIAQHVRLELNSIGSLEARANYRTALIDYLEQYQNVLDEDCKRRMYTNPLRVLDSKNPDVQAILGDAPQLSDYLDAESKQHFAGLCELLDAAGIEYTVNQRLVRGLDYYNRTVFEWITESLGSQGTVCGGGRYDGLVEQLGGKPTPAVGFAMGLERLVLMMETLGNTDVRRSVDVYMVTAGEGTMMAGMKLAEQLREQVPGLRVMTHFGGGNFKKQFKRADKVGAAIALVLGEDEVAAQTVVVKDLAGGEQNTVAQAEVAKLLAHLA</sequence>
<gene>
    <name evidence="1" type="primary">hisS</name>
    <name type="ordered locus">VC_0760</name>
</gene>
<feature type="chain" id="PRO_0000136290" description="Histidine--tRNA ligase">
    <location>
        <begin position="1"/>
        <end position="422"/>
    </location>
</feature>
<comment type="catalytic activity">
    <reaction evidence="1">
        <text>tRNA(His) + L-histidine + ATP = L-histidyl-tRNA(His) + AMP + diphosphate + H(+)</text>
        <dbReference type="Rhea" id="RHEA:17313"/>
        <dbReference type="Rhea" id="RHEA-COMP:9665"/>
        <dbReference type="Rhea" id="RHEA-COMP:9689"/>
        <dbReference type="ChEBI" id="CHEBI:15378"/>
        <dbReference type="ChEBI" id="CHEBI:30616"/>
        <dbReference type="ChEBI" id="CHEBI:33019"/>
        <dbReference type="ChEBI" id="CHEBI:57595"/>
        <dbReference type="ChEBI" id="CHEBI:78442"/>
        <dbReference type="ChEBI" id="CHEBI:78527"/>
        <dbReference type="ChEBI" id="CHEBI:456215"/>
        <dbReference type="EC" id="6.1.1.21"/>
    </reaction>
</comment>
<comment type="subunit">
    <text evidence="1">Homodimer.</text>
</comment>
<comment type="subcellular location">
    <subcellularLocation>
        <location evidence="1">Cytoplasm</location>
    </subcellularLocation>
</comment>
<comment type="similarity">
    <text evidence="1">Belongs to the class-II aminoacyl-tRNA synthetase family.</text>
</comment>
<name>SYH_VIBCH</name>